<feature type="chain" id="PRO_1000072714" description="Phosphatidylserine decarboxylase beta chain" evidence="1">
    <location>
        <begin position="1"/>
        <end position="189"/>
    </location>
</feature>
<feature type="chain" id="PRO_1000072715" description="Phosphatidylserine decarboxylase alpha chain" evidence="1">
    <location>
        <begin position="190"/>
        <end position="233"/>
    </location>
</feature>
<feature type="active site" description="Schiff-base intermediate with substrate; via pyruvic acid" evidence="1">
    <location>
        <position position="190"/>
    </location>
</feature>
<feature type="site" description="Cleavage (non-hydrolytic); by autocatalysis" evidence="1">
    <location>
        <begin position="189"/>
        <end position="190"/>
    </location>
</feature>
<feature type="modified residue" description="Pyruvic acid (Ser); by autocatalysis" evidence="1">
    <location>
        <position position="190"/>
    </location>
</feature>
<reference key="1">
    <citation type="submission" date="2007-04" db="EMBL/GenBank/DDBJ databases">
        <title>Complete genome sequence of the nitrogen-fixing bacterium Azorhizobium caulinodans ORS571.</title>
        <authorList>
            <person name="Lee K.B."/>
            <person name="Backer P.D."/>
            <person name="Aono T."/>
            <person name="Liu C.T."/>
            <person name="Suzuki S."/>
            <person name="Suzuki T."/>
            <person name="Kaneko T."/>
            <person name="Yamada M."/>
            <person name="Tabata S."/>
            <person name="Kupfer D.M."/>
            <person name="Najar F.Z."/>
            <person name="Wiley G.B."/>
            <person name="Roe B."/>
            <person name="Binnewies T."/>
            <person name="Ussery D."/>
            <person name="Vereecke D."/>
            <person name="Gevers D."/>
            <person name="Holsters M."/>
            <person name="Oyaizu H."/>
        </authorList>
    </citation>
    <scope>NUCLEOTIDE SEQUENCE [LARGE SCALE GENOMIC DNA]</scope>
    <source>
        <strain>ATCC 43989 / DSM 5975 / JCM 20966 / LMG 6465 / NBRC 14845 / NCIMB 13405 / ORS 571</strain>
    </source>
</reference>
<protein>
    <recommendedName>
        <fullName evidence="1">Phosphatidylserine decarboxylase proenzyme</fullName>
        <ecNumber evidence="1">4.1.1.65</ecNumber>
    </recommendedName>
    <component>
        <recommendedName>
            <fullName evidence="1">Phosphatidylserine decarboxylase alpha chain</fullName>
        </recommendedName>
    </component>
    <component>
        <recommendedName>
            <fullName evidence="1">Phosphatidylserine decarboxylase beta chain</fullName>
        </recommendedName>
    </component>
</protein>
<keyword id="KW-1003">Cell membrane</keyword>
<keyword id="KW-0210">Decarboxylase</keyword>
<keyword id="KW-0444">Lipid biosynthesis</keyword>
<keyword id="KW-0443">Lipid metabolism</keyword>
<keyword id="KW-0456">Lyase</keyword>
<keyword id="KW-0472">Membrane</keyword>
<keyword id="KW-0594">Phospholipid biosynthesis</keyword>
<keyword id="KW-1208">Phospholipid metabolism</keyword>
<keyword id="KW-0670">Pyruvate</keyword>
<keyword id="KW-1185">Reference proteome</keyword>
<keyword id="KW-0865">Zymogen</keyword>
<comment type="function">
    <text evidence="1">Catalyzes the formation of phosphatidylethanolamine (PtdEtn) from phosphatidylserine (PtdSer).</text>
</comment>
<comment type="catalytic activity">
    <reaction evidence="1">
        <text>a 1,2-diacyl-sn-glycero-3-phospho-L-serine + H(+) = a 1,2-diacyl-sn-glycero-3-phosphoethanolamine + CO2</text>
        <dbReference type="Rhea" id="RHEA:20828"/>
        <dbReference type="ChEBI" id="CHEBI:15378"/>
        <dbReference type="ChEBI" id="CHEBI:16526"/>
        <dbReference type="ChEBI" id="CHEBI:57262"/>
        <dbReference type="ChEBI" id="CHEBI:64612"/>
        <dbReference type="EC" id="4.1.1.65"/>
    </reaction>
</comment>
<comment type="cofactor">
    <cofactor evidence="1">
        <name>pyruvate</name>
        <dbReference type="ChEBI" id="CHEBI:15361"/>
    </cofactor>
    <text evidence="1">Binds 1 pyruvoyl group covalently per subunit.</text>
</comment>
<comment type="pathway">
    <text evidence="1">Phospholipid metabolism; phosphatidylethanolamine biosynthesis; phosphatidylethanolamine from CDP-diacylglycerol: step 2/2.</text>
</comment>
<comment type="subunit">
    <text evidence="1">Heterodimer of a large membrane-associated beta subunit and a small pyruvoyl-containing alpha subunit.</text>
</comment>
<comment type="subcellular location">
    <subcellularLocation>
        <location evidence="1">Cell membrane</location>
        <topology evidence="1">Peripheral membrane protein</topology>
    </subcellularLocation>
</comment>
<comment type="PTM">
    <text evidence="1">Is synthesized initially as an inactive proenzyme. Formation of the active enzyme involves a self-maturation process in which the active site pyruvoyl group is generated from an internal serine residue via an autocatalytic post-translational modification. Two non-identical subunits are generated from the proenzyme in this reaction, and the pyruvate is formed at the N-terminus of the alpha chain, which is derived from the carboxyl end of the proenzyme. The post-translation cleavage follows an unusual pathway, termed non-hydrolytic serinolysis, in which the side chain hydroxyl group of the serine supplies its oxygen atom to form the C-terminus of the beta chain, while the remainder of the serine residue undergoes an oxidative deamination to produce ammonia and the pyruvoyl prosthetic group on the alpha chain.</text>
</comment>
<comment type="similarity">
    <text evidence="1">Belongs to the phosphatidylserine decarboxylase family. PSD-A subfamily.</text>
</comment>
<name>PSD_AZOC5</name>
<organism>
    <name type="scientific">Azorhizobium caulinodans (strain ATCC 43989 / DSM 5975 / JCM 20966 / LMG 6465 / NBRC 14845 / NCIMB 13405 / ORS 571)</name>
    <dbReference type="NCBI Taxonomy" id="438753"/>
    <lineage>
        <taxon>Bacteria</taxon>
        <taxon>Pseudomonadati</taxon>
        <taxon>Pseudomonadota</taxon>
        <taxon>Alphaproteobacteria</taxon>
        <taxon>Hyphomicrobiales</taxon>
        <taxon>Xanthobacteraceae</taxon>
        <taxon>Azorhizobium</taxon>
    </lineage>
</organism>
<gene>
    <name evidence="1" type="primary">psd</name>
    <name type="ordered locus">AZC_1509</name>
</gene>
<dbReference type="EC" id="4.1.1.65" evidence="1"/>
<dbReference type="EMBL" id="AP009384">
    <property type="protein sequence ID" value="BAF87507.1"/>
    <property type="molecule type" value="Genomic_DNA"/>
</dbReference>
<dbReference type="RefSeq" id="WP_012170037.1">
    <property type="nucleotide sequence ID" value="NC_009937.1"/>
</dbReference>
<dbReference type="STRING" id="438753.AZC_1509"/>
<dbReference type="KEGG" id="azc:AZC_1509"/>
<dbReference type="eggNOG" id="COG0688">
    <property type="taxonomic scope" value="Bacteria"/>
</dbReference>
<dbReference type="HOGENOM" id="CLU_072492_0_0_5"/>
<dbReference type="UniPathway" id="UPA00558">
    <property type="reaction ID" value="UER00616"/>
</dbReference>
<dbReference type="Proteomes" id="UP000000270">
    <property type="component" value="Chromosome"/>
</dbReference>
<dbReference type="GO" id="GO:0005886">
    <property type="term" value="C:plasma membrane"/>
    <property type="evidence" value="ECO:0007669"/>
    <property type="project" value="UniProtKB-SubCell"/>
</dbReference>
<dbReference type="GO" id="GO:0004609">
    <property type="term" value="F:phosphatidylserine decarboxylase activity"/>
    <property type="evidence" value="ECO:0007669"/>
    <property type="project" value="UniProtKB-UniRule"/>
</dbReference>
<dbReference type="GO" id="GO:0006646">
    <property type="term" value="P:phosphatidylethanolamine biosynthetic process"/>
    <property type="evidence" value="ECO:0007669"/>
    <property type="project" value="UniProtKB-UniRule"/>
</dbReference>
<dbReference type="HAMAP" id="MF_00664">
    <property type="entry name" value="PS_decarb_PSD_A"/>
    <property type="match status" value="1"/>
</dbReference>
<dbReference type="InterPro" id="IPR003817">
    <property type="entry name" value="PS_Dcarbxylase"/>
</dbReference>
<dbReference type="InterPro" id="IPR033175">
    <property type="entry name" value="PSD-A"/>
</dbReference>
<dbReference type="NCBIfam" id="NF003677">
    <property type="entry name" value="PRK05305.1-1"/>
    <property type="match status" value="1"/>
</dbReference>
<dbReference type="NCBIfam" id="NF003678">
    <property type="entry name" value="PRK05305.1-2"/>
    <property type="match status" value="1"/>
</dbReference>
<dbReference type="NCBIfam" id="NF003679">
    <property type="entry name" value="PRK05305.1-3"/>
    <property type="match status" value="1"/>
</dbReference>
<dbReference type="NCBIfam" id="NF003685">
    <property type="entry name" value="PRK05305.2-5"/>
    <property type="match status" value="1"/>
</dbReference>
<dbReference type="PANTHER" id="PTHR35809">
    <property type="entry name" value="ARCHAETIDYLSERINE DECARBOXYLASE PROENZYME-RELATED"/>
    <property type="match status" value="1"/>
</dbReference>
<dbReference type="PANTHER" id="PTHR35809:SF1">
    <property type="entry name" value="ARCHAETIDYLSERINE DECARBOXYLASE PROENZYME-RELATED"/>
    <property type="match status" value="1"/>
</dbReference>
<dbReference type="Pfam" id="PF02666">
    <property type="entry name" value="PS_Dcarbxylase"/>
    <property type="match status" value="1"/>
</dbReference>
<sequence length="233" mass="25161">MSVLTSIRKSLVPIHREGYPFIAIAVVIAIGLLSVSTFFGMLAVGLAIWTALFFRDPQRVTPLREGLVVAPADGRISQIGLALPPRELGLSEVPLLRISIFMNVFNVHVNRAPVTGRIEKIAYKPGLFLNAELDKASEDNERNGLIIHGPNGVVGVVQIAGLIARRIVSFVHEGETIGAGERFGLIRFGSRVDVYLPVGTRVLVSEGQLTVAGETILADYDAAPTRDIAFRVS</sequence>
<accession>A8HXJ6</accession>
<evidence type="ECO:0000255" key="1">
    <source>
        <dbReference type="HAMAP-Rule" id="MF_00664"/>
    </source>
</evidence>
<proteinExistence type="inferred from homology"/>